<dbReference type="EC" id="2.3.1.117" evidence="1"/>
<dbReference type="EMBL" id="CP000319">
    <property type="protein sequence ID" value="ABE64424.1"/>
    <property type="molecule type" value="Genomic_DNA"/>
</dbReference>
<dbReference type="RefSeq" id="WP_011512063.1">
    <property type="nucleotide sequence ID" value="NC_007964.1"/>
</dbReference>
<dbReference type="SMR" id="Q1QH73"/>
<dbReference type="STRING" id="323097.Nham_3698"/>
<dbReference type="KEGG" id="nha:Nham_3698"/>
<dbReference type="eggNOG" id="COG2171">
    <property type="taxonomic scope" value="Bacteria"/>
</dbReference>
<dbReference type="HOGENOM" id="CLU_050859_0_1_5"/>
<dbReference type="OrthoDB" id="9775362at2"/>
<dbReference type="UniPathway" id="UPA00034">
    <property type="reaction ID" value="UER00019"/>
</dbReference>
<dbReference type="Proteomes" id="UP000001953">
    <property type="component" value="Chromosome"/>
</dbReference>
<dbReference type="GO" id="GO:0005737">
    <property type="term" value="C:cytoplasm"/>
    <property type="evidence" value="ECO:0007669"/>
    <property type="project" value="UniProtKB-SubCell"/>
</dbReference>
<dbReference type="GO" id="GO:0008666">
    <property type="term" value="F:2,3,4,5-tetrahydropyridine-2,6-dicarboxylate N-succinyltransferase activity"/>
    <property type="evidence" value="ECO:0007669"/>
    <property type="project" value="UniProtKB-UniRule"/>
</dbReference>
<dbReference type="GO" id="GO:0016779">
    <property type="term" value="F:nucleotidyltransferase activity"/>
    <property type="evidence" value="ECO:0007669"/>
    <property type="project" value="TreeGrafter"/>
</dbReference>
<dbReference type="GO" id="GO:0019877">
    <property type="term" value="P:diaminopimelate biosynthetic process"/>
    <property type="evidence" value="ECO:0007669"/>
    <property type="project" value="UniProtKB-UniRule"/>
</dbReference>
<dbReference type="GO" id="GO:0009089">
    <property type="term" value="P:lysine biosynthetic process via diaminopimelate"/>
    <property type="evidence" value="ECO:0007669"/>
    <property type="project" value="UniProtKB-UniRule"/>
</dbReference>
<dbReference type="CDD" id="cd03350">
    <property type="entry name" value="LbH_THP_succinylT"/>
    <property type="match status" value="1"/>
</dbReference>
<dbReference type="Gene3D" id="2.160.10.10">
    <property type="entry name" value="Hexapeptide repeat proteins"/>
    <property type="match status" value="1"/>
</dbReference>
<dbReference type="Gene3D" id="1.10.166.10">
    <property type="entry name" value="Tetrahydrodipicolinate-N-succinyltransferase, N-terminal domain"/>
    <property type="match status" value="1"/>
</dbReference>
<dbReference type="HAMAP" id="MF_00811">
    <property type="entry name" value="DapD"/>
    <property type="match status" value="1"/>
</dbReference>
<dbReference type="InterPro" id="IPR005664">
    <property type="entry name" value="DapD_Trfase_Hexpep_rpt_fam"/>
</dbReference>
<dbReference type="InterPro" id="IPR001451">
    <property type="entry name" value="Hexapep"/>
</dbReference>
<dbReference type="InterPro" id="IPR023180">
    <property type="entry name" value="THP_succinylTrfase_dom1"/>
</dbReference>
<dbReference type="InterPro" id="IPR037133">
    <property type="entry name" value="THP_succinylTrfase_N_sf"/>
</dbReference>
<dbReference type="InterPro" id="IPR011004">
    <property type="entry name" value="Trimer_LpxA-like_sf"/>
</dbReference>
<dbReference type="NCBIfam" id="TIGR00965">
    <property type="entry name" value="dapD"/>
    <property type="match status" value="1"/>
</dbReference>
<dbReference type="NCBIfam" id="NF008808">
    <property type="entry name" value="PRK11830.1"/>
    <property type="match status" value="1"/>
</dbReference>
<dbReference type="PANTHER" id="PTHR19136:SF52">
    <property type="entry name" value="2,3,4,5-TETRAHYDROPYRIDINE-2,6-DICARBOXYLATE N-SUCCINYLTRANSFERASE"/>
    <property type="match status" value="1"/>
</dbReference>
<dbReference type="PANTHER" id="PTHR19136">
    <property type="entry name" value="MOLYBDENUM COFACTOR GUANYLYLTRANSFERASE"/>
    <property type="match status" value="1"/>
</dbReference>
<dbReference type="Pfam" id="PF14602">
    <property type="entry name" value="Hexapep_2"/>
    <property type="match status" value="1"/>
</dbReference>
<dbReference type="Pfam" id="PF14805">
    <property type="entry name" value="THDPS_N_2"/>
    <property type="match status" value="1"/>
</dbReference>
<dbReference type="SUPFAM" id="SSF51161">
    <property type="entry name" value="Trimeric LpxA-like enzymes"/>
    <property type="match status" value="1"/>
</dbReference>
<evidence type="ECO:0000255" key="1">
    <source>
        <dbReference type="HAMAP-Rule" id="MF_00811"/>
    </source>
</evidence>
<comment type="catalytic activity">
    <reaction evidence="1">
        <text>(S)-2,3,4,5-tetrahydrodipicolinate + succinyl-CoA + H2O = (S)-2-succinylamino-6-oxoheptanedioate + CoA</text>
        <dbReference type="Rhea" id="RHEA:17325"/>
        <dbReference type="ChEBI" id="CHEBI:15377"/>
        <dbReference type="ChEBI" id="CHEBI:15685"/>
        <dbReference type="ChEBI" id="CHEBI:16845"/>
        <dbReference type="ChEBI" id="CHEBI:57287"/>
        <dbReference type="ChEBI" id="CHEBI:57292"/>
        <dbReference type="EC" id="2.3.1.117"/>
    </reaction>
</comment>
<comment type="pathway">
    <text evidence="1">Amino-acid biosynthesis; L-lysine biosynthesis via DAP pathway; LL-2,6-diaminopimelate from (S)-tetrahydrodipicolinate (succinylase route): step 1/3.</text>
</comment>
<comment type="subunit">
    <text evidence="1">Homotrimer.</text>
</comment>
<comment type="subcellular location">
    <subcellularLocation>
        <location evidence="1">Cytoplasm</location>
    </subcellularLocation>
</comment>
<comment type="similarity">
    <text evidence="1">Belongs to the transferase hexapeptide repeat family.</text>
</comment>
<protein>
    <recommendedName>
        <fullName evidence="1">2,3,4,5-tetrahydropyridine-2,6-dicarboxylate N-succinyltransferase</fullName>
        <ecNumber evidence="1">2.3.1.117</ecNumber>
    </recommendedName>
    <alternativeName>
        <fullName evidence="1">Tetrahydrodipicolinate N-succinyltransferase</fullName>
        <shortName evidence="1">THDP succinyltransferase</shortName>
        <shortName evidence="1">THP succinyltransferase</shortName>
        <shortName evidence="1">Tetrahydropicolinate succinylase</shortName>
    </alternativeName>
</protein>
<reference key="1">
    <citation type="submission" date="2006-03" db="EMBL/GenBank/DDBJ databases">
        <title>Complete sequence of chromosome of Nitrobacter hamburgensis X14.</title>
        <authorList>
            <consortium name="US DOE Joint Genome Institute"/>
            <person name="Copeland A."/>
            <person name="Lucas S."/>
            <person name="Lapidus A."/>
            <person name="Barry K."/>
            <person name="Detter J.C."/>
            <person name="Glavina del Rio T."/>
            <person name="Hammon N."/>
            <person name="Israni S."/>
            <person name="Dalin E."/>
            <person name="Tice H."/>
            <person name="Pitluck S."/>
            <person name="Chain P."/>
            <person name="Malfatti S."/>
            <person name="Shin M."/>
            <person name="Vergez L."/>
            <person name="Schmutz J."/>
            <person name="Larimer F."/>
            <person name="Land M."/>
            <person name="Hauser L."/>
            <person name="Kyrpides N."/>
            <person name="Ivanova N."/>
            <person name="Ward B."/>
            <person name="Arp D."/>
            <person name="Klotz M."/>
            <person name="Stein L."/>
            <person name="O'Mullan G."/>
            <person name="Starkenburg S."/>
            <person name="Sayavedra L."/>
            <person name="Poret-Peterson A.T."/>
            <person name="Gentry M.E."/>
            <person name="Bruce D."/>
            <person name="Richardson P."/>
        </authorList>
    </citation>
    <scope>NUCLEOTIDE SEQUENCE [LARGE SCALE GENOMIC DNA]</scope>
    <source>
        <strain>DSM 10229 / NCIMB 13809 / X14</strain>
    </source>
</reference>
<accession>Q1QH73</accession>
<proteinExistence type="inferred from homology"/>
<gene>
    <name evidence="1" type="primary">dapD</name>
    <name type="ordered locus">Nham_3698</name>
</gene>
<keyword id="KW-0012">Acyltransferase</keyword>
<keyword id="KW-0028">Amino-acid biosynthesis</keyword>
<keyword id="KW-0963">Cytoplasm</keyword>
<keyword id="KW-0220">Diaminopimelate biosynthesis</keyword>
<keyword id="KW-0457">Lysine biosynthesis</keyword>
<keyword id="KW-1185">Reference proteome</keyword>
<keyword id="KW-0677">Repeat</keyword>
<keyword id="KW-0808">Transferase</keyword>
<organism>
    <name type="scientific">Nitrobacter hamburgensis (strain DSM 10229 / NCIMB 13809 / X14)</name>
    <dbReference type="NCBI Taxonomy" id="323097"/>
    <lineage>
        <taxon>Bacteria</taxon>
        <taxon>Pseudomonadati</taxon>
        <taxon>Pseudomonadota</taxon>
        <taxon>Alphaproteobacteria</taxon>
        <taxon>Hyphomicrobiales</taxon>
        <taxon>Nitrobacteraceae</taxon>
        <taxon>Nitrobacter</taxon>
    </lineage>
</organism>
<feature type="chain" id="PRO_1000047155" description="2,3,4,5-tetrahydropyridine-2,6-dicarboxylate N-succinyltransferase">
    <location>
        <begin position="1"/>
        <end position="281"/>
    </location>
</feature>
<feature type="binding site" evidence="1">
    <location>
        <position position="108"/>
    </location>
    <ligand>
        <name>substrate</name>
    </ligand>
</feature>
<feature type="binding site" evidence="1">
    <location>
        <position position="145"/>
    </location>
    <ligand>
        <name>substrate</name>
    </ligand>
</feature>
<name>DAPD_NITHX</name>
<sequence length="281" mass="30009">MSLASLETTINGAFDARETVTAATKGEVREAVDHALDLLDKGEVRVAERAADGKWTVNQWLKKAVLLSFRLNDMSVIPGGPGKAVWWDKVPSKFEGWDENRFRDAGFRAVPGAIVRRSAYIAKNAVLMPSFVNLGAYVDESTMVDTWCTVGSCAQIGKRVHISGGAGIGGVLEPLQAGPVIIEDDCFIGARSEVAEGVIVRKGAVLSMGVFLGASTKIVDRETGEIFMGEVPEYAVVVPGALPGKPLKNGQPGPSTACAVIVKRVDERTRSKTGINELLRD</sequence>